<name>RL4_MYCTU</name>
<evidence type="ECO:0000255" key="1">
    <source>
        <dbReference type="HAMAP-Rule" id="MF_01328"/>
    </source>
</evidence>
<evidence type="ECO:0000256" key="2">
    <source>
        <dbReference type="SAM" id="MobiDB-lite"/>
    </source>
</evidence>
<evidence type="ECO:0000305" key="3"/>
<gene>
    <name evidence="1" type="primary">rplD</name>
    <name type="ordered locus">Rv0702</name>
    <name type="ORF">MTCY210.21</name>
</gene>
<protein>
    <recommendedName>
        <fullName evidence="1">Large ribosomal subunit protein uL4</fullName>
    </recommendedName>
    <alternativeName>
        <fullName evidence="3">50S ribosomal protein L4</fullName>
    </alternativeName>
</protein>
<organism>
    <name type="scientific">Mycobacterium tuberculosis (strain ATCC 25618 / H37Rv)</name>
    <dbReference type="NCBI Taxonomy" id="83332"/>
    <lineage>
        <taxon>Bacteria</taxon>
        <taxon>Bacillati</taxon>
        <taxon>Actinomycetota</taxon>
        <taxon>Actinomycetes</taxon>
        <taxon>Mycobacteriales</taxon>
        <taxon>Mycobacteriaceae</taxon>
        <taxon>Mycobacterium</taxon>
        <taxon>Mycobacterium tuberculosis complex</taxon>
    </lineage>
</organism>
<keyword id="KW-0002">3D-structure</keyword>
<keyword id="KW-1185">Reference proteome</keyword>
<keyword id="KW-0687">Ribonucleoprotein</keyword>
<keyword id="KW-0689">Ribosomal protein</keyword>
<keyword id="KW-0694">RNA-binding</keyword>
<keyword id="KW-0699">rRNA-binding</keyword>
<reference key="1">
    <citation type="journal article" date="1998" name="Nature">
        <title>Deciphering the biology of Mycobacterium tuberculosis from the complete genome sequence.</title>
        <authorList>
            <person name="Cole S.T."/>
            <person name="Brosch R."/>
            <person name="Parkhill J."/>
            <person name="Garnier T."/>
            <person name="Churcher C.M."/>
            <person name="Harris D.E."/>
            <person name="Gordon S.V."/>
            <person name="Eiglmeier K."/>
            <person name="Gas S."/>
            <person name="Barry C.E. III"/>
            <person name="Tekaia F."/>
            <person name="Badcock K."/>
            <person name="Basham D."/>
            <person name="Brown D."/>
            <person name="Chillingworth T."/>
            <person name="Connor R."/>
            <person name="Davies R.M."/>
            <person name="Devlin K."/>
            <person name="Feltwell T."/>
            <person name="Gentles S."/>
            <person name="Hamlin N."/>
            <person name="Holroyd S."/>
            <person name="Hornsby T."/>
            <person name="Jagels K."/>
            <person name="Krogh A."/>
            <person name="McLean J."/>
            <person name="Moule S."/>
            <person name="Murphy L.D."/>
            <person name="Oliver S."/>
            <person name="Osborne J."/>
            <person name="Quail M.A."/>
            <person name="Rajandream M.A."/>
            <person name="Rogers J."/>
            <person name="Rutter S."/>
            <person name="Seeger K."/>
            <person name="Skelton S."/>
            <person name="Squares S."/>
            <person name="Squares R."/>
            <person name="Sulston J.E."/>
            <person name="Taylor K."/>
            <person name="Whitehead S."/>
            <person name="Barrell B.G."/>
        </authorList>
    </citation>
    <scope>NUCLEOTIDE SEQUENCE [LARGE SCALE GENOMIC DNA]</scope>
    <source>
        <strain>ATCC 25618 / H37Rv</strain>
    </source>
</reference>
<reference key="2">
    <citation type="journal article" date="2011" name="Mol. Cell. Proteomics">
        <title>Proteogenomic analysis of Mycobacterium tuberculosis by high resolution mass spectrometry.</title>
        <authorList>
            <person name="Kelkar D.S."/>
            <person name="Kumar D."/>
            <person name="Kumar P."/>
            <person name="Balakrishnan L."/>
            <person name="Muthusamy B."/>
            <person name="Yadav A.K."/>
            <person name="Shrivastava P."/>
            <person name="Marimuthu A."/>
            <person name="Anand S."/>
            <person name="Sundaram H."/>
            <person name="Kingsbury R."/>
            <person name="Harsha H.C."/>
            <person name="Nair B."/>
            <person name="Prasad T.S."/>
            <person name="Chauhan D.S."/>
            <person name="Katoch K."/>
            <person name="Katoch V.M."/>
            <person name="Kumar P."/>
            <person name="Chaerkady R."/>
            <person name="Ramachandran S."/>
            <person name="Dash D."/>
            <person name="Pandey A."/>
        </authorList>
    </citation>
    <scope>IDENTIFICATION BY MASS SPECTROMETRY [LARGE SCALE ANALYSIS]</scope>
    <source>
        <strain>ATCC 25618 / H37Rv</strain>
    </source>
</reference>
<feature type="chain" id="PRO_0000129247" description="Large ribosomal subunit protein uL4">
    <location>
        <begin position="1"/>
        <end position="223"/>
    </location>
</feature>
<feature type="region of interest" description="Disordered" evidence="2">
    <location>
        <begin position="49"/>
        <end position="106"/>
    </location>
</feature>
<accession>P9WH85</accession>
<accession>L0T4L8</accession>
<accession>O06045</accession>
<accession>P60729</accession>
<accession>P95050</accession>
<dbReference type="EMBL" id="AL123456">
    <property type="protein sequence ID" value="CCP43446.1"/>
    <property type="molecule type" value="Genomic_DNA"/>
</dbReference>
<dbReference type="PIR" id="A70642">
    <property type="entry name" value="A70642"/>
</dbReference>
<dbReference type="RefSeq" id="NP_215216.1">
    <property type="nucleotide sequence ID" value="NC_000962.3"/>
</dbReference>
<dbReference type="RefSeq" id="WP_003403580.1">
    <property type="nucleotide sequence ID" value="NZ_NVQJ01000007.1"/>
</dbReference>
<dbReference type="PDB" id="5V7Q">
    <property type="method" value="EM"/>
    <property type="resolution" value="3.70 A"/>
    <property type="chains" value="E=1-223"/>
</dbReference>
<dbReference type="PDB" id="5V93">
    <property type="method" value="EM"/>
    <property type="resolution" value="4.00 A"/>
    <property type="chains" value="E=1-223"/>
</dbReference>
<dbReference type="PDB" id="7KGB">
    <property type="method" value="EM"/>
    <property type="resolution" value="2.70 A"/>
    <property type="chains" value="E=1-223"/>
</dbReference>
<dbReference type="PDB" id="7MSC">
    <property type="method" value="EM"/>
    <property type="resolution" value="2.97 A"/>
    <property type="chains" value="E=1-223"/>
</dbReference>
<dbReference type="PDB" id="7MSH">
    <property type="method" value="EM"/>
    <property type="resolution" value="3.23 A"/>
    <property type="chains" value="E=1-223"/>
</dbReference>
<dbReference type="PDB" id="7MSM">
    <property type="method" value="EM"/>
    <property type="resolution" value="2.79 A"/>
    <property type="chains" value="E=1-223"/>
</dbReference>
<dbReference type="PDB" id="7MSZ">
    <property type="method" value="EM"/>
    <property type="resolution" value="3.10 A"/>
    <property type="chains" value="E=1-223"/>
</dbReference>
<dbReference type="PDB" id="7MT2">
    <property type="method" value="EM"/>
    <property type="resolution" value="2.76 A"/>
    <property type="chains" value="E=1-223"/>
</dbReference>
<dbReference type="PDB" id="7MT3">
    <property type="method" value="EM"/>
    <property type="resolution" value="2.80 A"/>
    <property type="chains" value="E=1-223"/>
</dbReference>
<dbReference type="PDB" id="7MT7">
    <property type="method" value="EM"/>
    <property type="resolution" value="2.71 A"/>
    <property type="chains" value="E=1-223"/>
</dbReference>
<dbReference type="PDB" id="7SFR">
    <property type="method" value="EM"/>
    <property type="resolution" value="2.60 A"/>
    <property type="chains" value="E=9-215"/>
</dbReference>
<dbReference type="PDBsum" id="5V7Q"/>
<dbReference type="PDBsum" id="5V93"/>
<dbReference type="PDBsum" id="7KGB"/>
<dbReference type="PDBsum" id="7MSC"/>
<dbReference type="PDBsum" id="7MSH"/>
<dbReference type="PDBsum" id="7MSM"/>
<dbReference type="PDBsum" id="7MSZ"/>
<dbReference type="PDBsum" id="7MT2"/>
<dbReference type="PDBsum" id="7MT3"/>
<dbReference type="PDBsum" id="7MT7"/>
<dbReference type="PDBsum" id="7SFR"/>
<dbReference type="EMDB" id="EMD-22865"/>
<dbReference type="EMDB" id="EMD-23961"/>
<dbReference type="EMDB" id="EMD-23962"/>
<dbReference type="EMDB" id="EMD-23969"/>
<dbReference type="EMDB" id="EMD-23972"/>
<dbReference type="EMDB" id="EMD-23974"/>
<dbReference type="EMDB" id="EMD-23975"/>
<dbReference type="EMDB" id="EMD-23976"/>
<dbReference type="EMDB" id="EMD-8645"/>
<dbReference type="SMR" id="P9WH85"/>
<dbReference type="FunCoup" id="P9WH85">
    <property type="interactions" value="402"/>
</dbReference>
<dbReference type="STRING" id="83332.Rv0702"/>
<dbReference type="PaxDb" id="83332-Rv0702"/>
<dbReference type="DNASU" id="888345"/>
<dbReference type="GeneID" id="888345"/>
<dbReference type="KEGG" id="mtu:Rv0702"/>
<dbReference type="KEGG" id="mtv:RVBD_0702"/>
<dbReference type="TubercuList" id="Rv0702"/>
<dbReference type="eggNOG" id="COG0088">
    <property type="taxonomic scope" value="Bacteria"/>
</dbReference>
<dbReference type="InParanoid" id="P9WH85"/>
<dbReference type="OrthoDB" id="9803201at2"/>
<dbReference type="PhylomeDB" id="P9WH85"/>
<dbReference type="PRO" id="PR:P9WH85"/>
<dbReference type="Proteomes" id="UP000001584">
    <property type="component" value="Chromosome"/>
</dbReference>
<dbReference type="GO" id="GO:0005829">
    <property type="term" value="C:cytosol"/>
    <property type="evidence" value="ECO:0007005"/>
    <property type="project" value="MTBBASE"/>
</dbReference>
<dbReference type="GO" id="GO:0005886">
    <property type="term" value="C:plasma membrane"/>
    <property type="evidence" value="ECO:0007005"/>
    <property type="project" value="MTBBASE"/>
</dbReference>
<dbReference type="GO" id="GO:1990904">
    <property type="term" value="C:ribonucleoprotein complex"/>
    <property type="evidence" value="ECO:0007669"/>
    <property type="project" value="UniProtKB-KW"/>
</dbReference>
<dbReference type="GO" id="GO:0005840">
    <property type="term" value="C:ribosome"/>
    <property type="evidence" value="ECO:0007669"/>
    <property type="project" value="UniProtKB-KW"/>
</dbReference>
<dbReference type="GO" id="GO:0019843">
    <property type="term" value="F:rRNA binding"/>
    <property type="evidence" value="ECO:0007669"/>
    <property type="project" value="UniProtKB-UniRule"/>
</dbReference>
<dbReference type="GO" id="GO:0003735">
    <property type="term" value="F:structural constituent of ribosome"/>
    <property type="evidence" value="ECO:0000318"/>
    <property type="project" value="GO_Central"/>
</dbReference>
<dbReference type="GO" id="GO:0006412">
    <property type="term" value="P:translation"/>
    <property type="evidence" value="ECO:0007669"/>
    <property type="project" value="UniProtKB-UniRule"/>
</dbReference>
<dbReference type="FunFam" id="3.40.1370.10:FF:000004">
    <property type="entry name" value="50S ribosomal protein L4"/>
    <property type="match status" value="1"/>
</dbReference>
<dbReference type="Gene3D" id="3.40.1370.10">
    <property type="match status" value="1"/>
</dbReference>
<dbReference type="HAMAP" id="MF_01328_B">
    <property type="entry name" value="Ribosomal_uL4_B"/>
    <property type="match status" value="1"/>
</dbReference>
<dbReference type="InterPro" id="IPR002136">
    <property type="entry name" value="Ribosomal_uL4"/>
</dbReference>
<dbReference type="InterPro" id="IPR013005">
    <property type="entry name" value="Ribosomal_uL4-like"/>
</dbReference>
<dbReference type="InterPro" id="IPR023574">
    <property type="entry name" value="Ribosomal_uL4_dom_sf"/>
</dbReference>
<dbReference type="NCBIfam" id="TIGR03953">
    <property type="entry name" value="rplD_bact"/>
    <property type="match status" value="1"/>
</dbReference>
<dbReference type="PANTHER" id="PTHR10746">
    <property type="entry name" value="50S RIBOSOMAL PROTEIN L4"/>
    <property type="match status" value="1"/>
</dbReference>
<dbReference type="PANTHER" id="PTHR10746:SF6">
    <property type="entry name" value="LARGE RIBOSOMAL SUBUNIT PROTEIN UL4M"/>
    <property type="match status" value="1"/>
</dbReference>
<dbReference type="Pfam" id="PF00573">
    <property type="entry name" value="Ribosomal_L4"/>
    <property type="match status" value="1"/>
</dbReference>
<dbReference type="SUPFAM" id="SSF52166">
    <property type="entry name" value="Ribosomal protein L4"/>
    <property type="match status" value="1"/>
</dbReference>
<comment type="function">
    <text evidence="1">One of the primary rRNA binding proteins, this protein initially binds near the 5'-end of the 23S rRNA. It is important during the early stages of 50S assembly. It makes multiple contacts with different domains of the 23S rRNA in the assembled 50S subunit and ribosome.</text>
</comment>
<comment type="function">
    <text evidence="1">Forms part of the polypeptide exit tunnel.</text>
</comment>
<comment type="subunit">
    <text evidence="1">Part of the 50S ribosomal subunit.</text>
</comment>
<comment type="similarity">
    <text evidence="1">Belongs to the universal ribosomal protein uL4 family.</text>
</comment>
<sequence length="223" mass="23743">MAAQEQKTLKIDVKTPAGKVDGAIELPAELFDVPANIALMHQVVTAQRAAARQGTHSTKTRGEVSGGGRKPYRQKGTGRARQGSTRAPQFTGGGVVHGPKPRDYSQRTPKKMIAAALRGALSDRARNGRIHAITELVEGQNPSTKSARAFLASLTERKQVLVVIGRSDEAGAKSVRNLPGVHILAPDQLNTYDVLRADDVVFSVEALNAYIAANTTTSEEVSA</sequence>
<proteinExistence type="evidence at protein level"/>